<comment type="function">
    <text evidence="1">With S4 and S12 plays an important role in translational accuracy.</text>
</comment>
<comment type="function">
    <text evidence="1">Located at the back of the 30S subunit body where it stabilizes the conformation of the head with respect to the body.</text>
</comment>
<comment type="subunit">
    <text evidence="1">Part of the 30S ribosomal subunit. Contacts proteins S4 and S8.</text>
</comment>
<comment type="domain">
    <text>The N-terminal domain interacts with the head of the 30S subunit; the C-terminal domain interacts with the body and contacts protein S4. The interaction surface between S4 and S5 is involved in control of translational fidelity.</text>
</comment>
<comment type="similarity">
    <text evidence="1">Belongs to the universal ribosomal protein uS5 family.</text>
</comment>
<protein>
    <recommendedName>
        <fullName evidence="1">Small ribosomal subunit protein uS5</fullName>
    </recommendedName>
    <alternativeName>
        <fullName evidence="2">30S ribosomal protein S5</fullName>
    </alternativeName>
</protein>
<gene>
    <name evidence="1" type="primary">rpsE</name>
    <name type="ordered locus">HEAR3149</name>
</gene>
<keyword id="KW-1185">Reference proteome</keyword>
<keyword id="KW-0687">Ribonucleoprotein</keyword>
<keyword id="KW-0689">Ribosomal protein</keyword>
<keyword id="KW-0694">RNA-binding</keyword>
<keyword id="KW-0699">rRNA-binding</keyword>
<dbReference type="EMBL" id="CU207211">
    <property type="protein sequence ID" value="CAL63258.1"/>
    <property type="molecule type" value="Genomic_DNA"/>
</dbReference>
<dbReference type="SMR" id="A4G9S1"/>
<dbReference type="STRING" id="204773.HEAR3149"/>
<dbReference type="KEGG" id="har:HEAR3149"/>
<dbReference type="eggNOG" id="COG0098">
    <property type="taxonomic scope" value="Bacteria"/>
</dbReference>
<dbReference type="HOGENOM" id="CLU_065898_2_2_4"/>
<dbReference type="OrthoDB" id="9809045at2"/>
<dbReference type="Proteomes" id="UP000006697">
    <property type="component" value="Chromosome"/>
</dbReference>
<dbReference type="GO" id="GO:0015935">
    <property type="term" value="C:small ribosomal subunit"/>
    <property type="evidence" value="ECO:0007669"/>
    <property type="project" value="InterPro"/>
</dbReference>
<dbReference type="GO" id="GO:0019843">
    <property type="term" value="F:rRNA binding"/>
    <property type="evidence" value="ECO:0007669"/>
    <property type="project" value="UniProtKB-UniRule"/>
</dbReference>
<dbReference type="GO" id="GO:0003735">
    <property type="term" value="F:structural constituent of ribosome"/>
    <property type="evidence" value="ECO:0007669"/>
    <property type="project" value="InterPro"/>
</dbReference>
<dbReference type="GO" id="GO:0006412">
    <property type="term" value="P:translation"/>
    <property type="evidence" value="ECO:0007669"/>
    <property type="project" value="UniProtKB-UniRule"/>
</dbReference>
<dbReference type="FunFam" id="3.30.160.20:FF:000001">
    <property type="entry name" value="30S ribosomal protein S5"/>
    <property type="match status" value="1"/>
</dbReference>
<dbReference type="FunFam" id="3.30.230.10:FF:000002">
    <property type="entry name" value="30S ribosomal protein S5"/>
    <property type="match status" value="1"/>
</dbReference>
<dbReference type="Gene3D" id="3.30.160.20">
    <property type="match status" value="1"/>
</dbReference>
<dbReference type="Gene3D" id="3.30.230.10">
    <property type="match status" value="1"/>
</dbReference>
<dbReference type="HAMAP" id="MF_01307_B">
    <property type="entry name" value="Ribosomal_uS5_B"/>
    <property type="match status" value="1"/>
</dbReference>
<dbReference type="InterPro" id="IPR020568">
    <property type="entry name" value="Ribosomal_Su5_D2-typ_SF"/>
</dbReference>
<dbReference type="InterPro" id="IPR000851">
    <property type="entry name" value="Ribosomal_uS5"/>
</dbReference>
<dbReference type="InterPro" id="IPR005712">
    <property type="entry name" value="Ribosomal_uS5_bac-type"/>
</dbReference>
<dbReference type="InterPro" id="IPR005324">
    <property type="entry name" value="Ribosomal_uS5_C"/>
</dbReference>
<dbReference type="InterPro" id="IPR013810">
    <property type="entry name" value="Ribosomal_uS5_N"/>
</dbReference>
<dbReference type="InterPro" id="IPR018192">
    <property type="entry name" value="Ribosomal_uS5_N_CS"/>
</dbReference>
<dbReference type="InterPro" id="IPR014721">
    <property type="entry name" value="Ribsml_uS5_D2-typ_fold_subgr"/>
</dbReference>
<dbReference type="NCBIfam" id="TIGR01021">
    <property type="entry name" value="rpsE_bact"/>
    <property type="match status" value="1"/>
</dbReference>
<dbReference type="PANTHER" id="PTHR48277">
    <property type="entry name" value="MITOCHONDRIAL RIBOSOMAL PROTEIN S5"/>
    <property type="match status" value="1"/>
</dbReference>
<dbReference type="PANTHER" id="PTHR48277:SF1">
    <property type="entry name" value="MITOCHONDRIAL RIBOSOMAL PROTEIN S5"/>
    <property type="match status" value="1"/>
</dbReference>
<dbReference type="Pfam" id="PF00333">
    <property type="entry name" value="Ribosomal_S5"/>
    <property type="match status" value="1"/>
</dbReference>
<dbReference type="Pfam" id="PF03719">
    <property type="entry name" value="Ribosomal_S5_C"/>
    <property type="match status" value="1"/>
</dbReference>
<dbReference type="SUPFAM" id="SSF54768">
    <property type="entry name" value="dsRNA-binding domain-like"/>
    <property type="match status" value="1"/>
</dbReference>
<dbReference type="SUPFAM" id="SSF54211">
    <property type="entry name" value="Ribosomal protein S5 domain 2-like"/>
    <property type="match status" value="1"/>
</dbReference>
<dbReference type="PROSITE" id="PS00585">
    <property type="entry name" value="RIBOSOMAL_S5"/>
    <property type="match status" value="1"/>
</dbReference>
<dbReference type="PROSITE" id="PS50881">
    <property type="entry name" value="S5_DSRBD"/>
    <property type="match status" value="1"/>
</dbReference>
<sequence length="172" mass="18141">MAKMQSKMQSEKPDDGMREKMIAVNRVTKVVKGGRIMGFAALAVVGDGDGRIGMGKGKSKEVPVAVQKAMEEARRKMIKVTLKNGTLQHTVTGKHGASSVLMLPAKEGTGVIAGGPMRAIFEVMGVTNVVAKSTGSTNPYNMVRATLEGLAKMNTPSEIAAKRGKSVEEILG</sequence>
<name>RS5_HERAR</name>
<accession>A4G9S1</accession>
<feature type="chain" id="PRO_0000323136" description="Small ribosomal subunit protein uS5">
    <location>
        <begin position="1"/>
        <end position="172"/>
    </location>
</feature>
<feature type="domain" description="S5 DRBM" evidence="1">
    <location>
        <begin position="17"/>
        <end position="80"/>
    </location>
</feature>
<evidence type="ECO:0000255" key="1">
    <source>
        <dbReference type="HAMAP-Rule" id="MF_01307"/>
    </source>
</evidence>
<evidence type="ECO:0000305" key="2"/>
<proteinExistence type="inferred from homology"/>
<reference key="1">
    <citation type="journal article" date="2007" name="PLoS Genet.">
        <title>A tale of two oxidation states: bacterial colonization of arsenic-rich environments.</title>
        <authorList>
            <person name="Muller D."/>
            <person name="Medigue C."/>
            <person name="Koechler S."/>
            <person name="Barbe V."/>
            <person name="Barakat M."/>
            <person name="Talla E."/>
            <person name="Bonnefoy V."/>
            <person name="Krin E."/>
            <person name="Arsene-Ploetze F."/>
            <person name="Carapito C."/>
            <person name="Chandler M."/>
            <person name="Cournoyer B."/>
            <person name="Cruveiller S."/>
            <person name="Dossat C."/>
            <person name="Duval S."/>
            <person name="Heymann M."/>
            <person name="Leize E."/>
            <person name="Lieutaud A."/>
            <person name="Lievremont D."/>
            <person name="Makita Y."/>
            <person name="Mangenot S."/>
            <person name="Nitschke W."/>
            <person name="Ortet P."/>
            <person name="Perdrial N."/>
            <person name="Schoepp B."/>
            <person name="Siguier P."/>
            <person name="Simeonova D.D."/>
            <person name="Rouy Z."/>
            <person name="Segurens B."/>
            <person name="Turlin E."/>
            <person name="Vallenet D."/>
            <person name="van Dorsselaer A."/>
            <person name="Weiss S."/>
            <person name="Weissenbach J."/>
            <person name="Lett M.-C."/>
            <person name="Danchin A."/>
            <person name="Bertin P.N."/>
        </authorList>
    </citation>
    <scope>NUCLEOTIDE SEQUENCE [LARGE SCALE GENOMIC DNA]</scope>
    <source>
        <strain>ULPAs1</strain>
    </source>
</reference>
<organism>
    <name type="scientific">Herminiimonas arsenicoxydans</name>
    <dbReference type="NCBI Taxonomy" id="204773"/>
    <lineage>
        <taxon>Bacteria</taxon>
        <taxon>Pseudomonadati</taxon>
        <taxon>Pseudomonadota</taxon>
        <taxon>Betaproteobacteria</taxon>
        <taxon>Burkholderiales</taxon>
        <taxon>Oxalobacteraceae</taxon>
        <taxon>Herminiimonas</taxon>
    </lineage>
</organism>